<name>PTH_LISMO</name>
<dbReference type="EC" id="3.1.1.29" evidence="1"/>
<dbReference type="EMBL" id="AL591974">
    <property type="protein sequence ID" value="CAD00740.1"/>
    <property type="molecule type" value="Genomic_DNA"/>
</dbReference>
<dbReference type="PIR" id="AF1101">
    <property type="entry name" value="AF1101"/>
</dbReference>
<dbReference type="RefSeq" id="NP_463744.1">
    <property type="nucleotide sequence ID" value="NC_003210.1"/>
</dbReference>
<dbReference type="RefSeq" id="WP_003722742.1">
    <property type="nucleotide sequence ID" value="NZ_CP149495.1"/>
</dbReference>
<dbReference type="SMR" id="Q8YAD1"/>
<dbReference type="STRING" id="169963.gene:17592849"/>
<dbReference type="PaxDb" id="169963-lmo0213"/>
<dbReference type="EnsemblBacteria" id="CAD00740">
    <property type="protein sequence ID" value="CAD00740"/>
    <property type="gene ID" value="CAD00740"/>
</dbReference>
<dbReference type="GeneID" id="987046"/>
<dbReference type="KEGG" id="lmo:lmo0213"/>
<dbReference type="PATRIC" id="fig|169963.11.peg.218"/>
<dbReference type="eggNOG" id="COG0193">
    <property type="taxonomic scope" value="Bacteria"/>
</dbReference>
<dbReference type="HOGENOM" id="CLU_062456_4_1_9"/>
<dbReference type="OrthoDB" id="9800507at2"/>
<dbReference type="PhylomeDB" id="Q8YAD1"/>
<dbReference type="BioCyc" id="LMON169963:LMO0213-MONOMER"/>
<dbReference type="Proteomes" id="UP000000817">
    <property type="component" value="Chromosome"/>
</dbReference>
<dbReference type="GO" id="GO:0005737">
    <property type="term" value="C:cytoplasm"/>
    <property type="evidence" value="ECO:0007669"/>
    <property type="project" value="UniProtKB-SubCell"/>
</dbReference>
<dbReference type="GO" id="GO:0004045">
    <property type="term" value="F:peptidyl-tRNA hydrolase activity"/>
    <property type="evidence" value="ECO:0000318"/>
    <property type="project" value="GO_Central"/>
</dbReference>
<dbReference type="GO" id="GO:0000049">
    <property type="term" value="F:tRNA binding"/>
    <property type="evidence" value="ECO:0007669"/>
    <property type="project" value="UniProtKB-UniRule"/>
</dbReference>
<dbReference type="GO" id="GO:0006515">
    <property type="term" value="P:protein quality control for misfolded or incompletely synthesized proteins"/>
    <property type="evidence" value="ECO:0007669"/>
    <property type="project" value="UniProtKB-UniRule"/>
</dbReference>
<dbReference type="GO" id="GO:0072344">
    <property type="term" value="P:rescue of stalled ribosome"/>
    <property type="evidence" value="ECO:0007669"/>
    <property type="project" value="UniProtKB-UniRule"/>
</dbReference>
<dbReference type="CDD" id="cd00462">
    <property type="entry name" value="PTH"/>
    <property type="match status" value="1"/>
</dbReference>
<dbReference type="FunFam" id="3.40.50.1470:FF:000001">
    <property type="entry name" value="Peptidyl-tRNA hydrolase"/>
    <property type="match status" value="1"/>
</dbReference>
<dbReference type="Gene3D" id="3.40.50.1470">
    <property type="entry name" value="Peptidyl-tRNA hydrolase"/>
    <property type="match status" value="1"/>
</dbReference>
<dbReference type="HAMAP" id="MF_00083">
    <property type="entry name" value="Pept_tRNA_hydro_bact"/>
    <property type="match status" value="1"/>
</dbReference>
<dbReference type="InterPro" id="IPR001328">
    <property type="entry name" value="Pept_tRNA_hydro"/>
</dbReference>
<dbReference type="InterPro" id="IPR018171">
    <property type="entry name" value="Pept_tRNA_hydro_CS"/>
</dbReference>
<dbReference type="InterPro" id="IPR036416">
    <property type="entry name" value="Pept_tRNA_hydro_sf"/>
</dbReference>
<dbReference type="NCBIfam" id="TIGR00447">
    <property type="entry name" value="pth"/>
    <property type="match status" value="1"/>
</dbReference>
<dbReference type="PANTHER" id="PTHR17224">
    <property type="entry name" value="PEPTIDYL-TRNA HYDROLASE"/>
    <property type="match status" value="1"/>
</dbReference>
<dbReference type="PANTHER" id="PTHR17224:SF1">
    <property type="entry name" value="PEPTIDYL-TRNA HYDROLASE"/>
    <property type="match status" value="1"/>
</dbReference>
<dbReference type="Pfam" id="PF01195">
    <property type="entry name" value="Pept_tRNA_hydro"/>
    <property type="match status" value="1"/>
</dbReference>
<dbReference type="SUPFAM" id="SSF53178">
    <property type="entry name" value="Peptidyl-tRNA hydrolase-like"/>
    <property type="match status" value="1"/>
</dbReference>
<dbReference type="PROSITE" id="PS01195">
    <property type="entry name" value="PEPT_TRNA_HYDROL_1"/>
    <property type="match status" value="1"/>
</dbReference>
<dbReference type="PROSITE" id="PS01196">
    <property type="entry name" value="PEPT_TRNA_HYDROL_2"/>
    <property type="match status" value="1"/>
</dbReference>
<organism>
    <name type="scientific">Listeria monocytogenes serovar 1/2a (strain ATCC BAA-679 / EGD-e)</name>
    <dbReference type="NCBI Taxonomy" id="169963"/>
    <lineage>
        <taxon>Bacteria</taxon>
        <taxon>Bacillati</taxon>
        <taxon>Bacillota</taxon>
        <taxon>Bacilli</taxon>
        <taxon>Bacillales</taxon>
        <taxon>Listeriaceae</taxon>
        <taxon>Listeria</taxon>
    </lineage>
</organism>
<gene>
    <name evidence="1" type="primary">pth</name>
    <name type="ordered locus">lmo0213</name>
</gene>
<feature type="chain" id="PRO_0000187765" description="Peptidyl-tRNA hydrolase">
    <location>
        <begin position="1"/>
        <end position="186"/>
    </location>
</feature>
<feature type="active site" description="Proton acceptor" evidence="1">
    <location>
        <position position="19"/>
    </location>
</feature>
<feature type="binding site" evidence="1">
    <location>
        <position position="14"/>
    </location>
    <ligand>
        <name>tRNA</name>
        <dbReference type="ChEBI" id="CHEBI:17843"/>
    </ligand>
</feature>
<feature type="binding site" evidence="1">
    <location>
        <position position="64"/>
    </location>
    <ligand>
        <name>tRNA</name>
        <dbReference type="ChEBI" id="CHEBI:17843"/>
    </ligand>
</feature>
<feature type="binding site" evidence="1">
    <location>
        <position position="66"/>
    </location>
    <ligand>
        <name>tRNA</name>
        <dbReference type="ChEBI" id="CHEBI:17843"/>
    </ligand>
</feature>
<feature type="binding site" evidence="1">
    <location>
        <position position="112"/>
    </location>
    <ligand>
        <name>tRNA</name>
        <dbReference type="ChEBI" id="CHEBI:17843"/>
    </ligand>
</feature>
<feature type="site" description="Discriminates between blocked and unblocked aminoacyl-tRNA" evidence="1">
    <location>
        <position position="9"/>
    </location>
</feature>
<feature type="site" description="Stabilizes the basic form of H active site to accept a proton" evidence="1">
    <location>
        <position position="91"/>
    </location>
</feature>
<proteinExistence type="inferred from homology"/>
<keyword id="KW-0963">Cytoplasm</keyword>
<keyword id="KW-0378">Hydrolase</keyword>
<keyword id="KW-1185">Reference proteome</keyword>
<keyword id="KW-0694">RNA-binding</keyword>
<keyword id="KW-0820">tRNA-binding</keyword>
<protein>
    <recommendedName>
        <fullName evidence="1">Peptidyl-tRNA hydrolase</fullName>
        <shortName evidence="1">Pth</shortName>
        <ecNumber evidence="1">3.1.1.29</ecNumber>
    </recommendedName>
</protein>
<accession>Q8YAD1</accession>
<comment type="function">
    <text evidence="1">Hydrolyzes ribosome-free peptidyl-tRNAs (with 1 or more amino acids incorporated), which drop off the ribosome during protein synthesis, or as a result of ribosome stalling.</text>
</comment>
<comment type="function">
    <text evidence="1">Catalyzes the release of premature peptidyl moieties from peptidyl-tRNA molecules trapped in stalled 50S ribosomal subunits, and thus maintains levels of free tRNAs and 50S ribosomes.</text>
</comment>
<comment type="catalytic activity">
    <reaction evidence="1">
        <text>an N-acyl-L-alpha-aminoacyl-tRNA + H2O = an N-acyl-L-amino acid + a tRNA + H(+)</text>
        <dbReference type="Rhea" id="RHEA:54448"/>
        <dbReference type="Rhea" id="RHEA-COMP:10123"/>
        <dbReference type="Rhea" id="RHEA-COMP:13883"/>
        <dbReference type="ChEBI" id="CHEBI:15377"/>
        <dbReference type="ChEBI" id="CHEBI:15378"/>
        <dbReference type="ChEBI" id="CHEBI:59874"/>
        <dbReference type="ChEBI" id="CHEBI:78442"/>
        <dbReference type="ChEBI" id="CHEBI:138191"/>
        <dbReference type="EC" id="3.1.1.29"/>
    </reaction>
</comment>
<comment type="subunit">
    <text evidence="1">Monomer.</text>
</comment>
<comment type="subcellular location">
    <subcellularLocation>
        <location evidence="1">Cytoplasm</location>
    </subcellularLocation>
</comment>
<comment type="similarity">
    <text evidence="1">Belongs to the PTH family.</text>
</comment>
<reference key="1">
    <citation type="journal article" date="2001" name="Science">
        <title>Comparative genomics of Listeria species.</title>
        <authorList>
            <person name="Glaser P."/>
            <person name="Frangeul L."/>
            <person name="Buchrieser C."/>
            <person name="Rusniok C."/>
            <person name="Amend A."/>
            <person name="Baquero F."/>
            <person name="Berche P."/>
            <person name="Bloecker H."/>
            <person name="Brandt P."/>
            <person name="Chakraborty T."/>
            <person name="Charbit A."/>
            <person name="Chetouani F."/>
            <person name="Couve E."/>
            <person name="de Daruvar A."/>
            <person name="Dehoux P."/>
            <person name="Domann E."/>
            <person name="Dominguez-Bernal G."/>
            <person name="Duchaud E."/>
            <person name="Durant L."/>
            <person name="Dussurget O."/>
            <person name="Entian K.-D."/>
            <person name="Fsihi H."/>
            <person name="Garcia-del Portillo F."/>
            <person name="Garrido P."/>
            <person name="Gautier L."/>
            <person name="Goebel W."/>
            <person name="Gomez-Lopez N."/>
            <person name="Hain T."/>
            <person name="Hauf J."/>
            <person name="Jackson D."/>
            <person name="Jones L.-M."/>
            <person name="Kaerst U."/>
            <person name="Kreft J."/>
            <person name="Kuhn M."/>
            <person name="Kunst F."/>
            <person name="Kurapkat G."/>
            <person name="Madueno E."/>
            <person name="Maitournam A."/>
            <person name="Mata Vicente J."/>
            <person name="Ng E."/>
            <person name="Nedjari H."/>
            <person name="Nordsiek G."/>
            <person name="Novella S."/>
            <person name="de Pablos B."/>
            <person name="Perez-Diaz J.-C."/>
            <person name="Purcell R."/>
            <person name="Remmel B."/>
            <person name="Rose M."/>
            <person name="Schlueter T."/>
            <person name="Simoes N."/>
            <person name="Tierrez A."/>
            <person name="Vazquez-Boland J.-A."/>
            <person name="Voss H."/>
            <person name="Wehland J."/>
            <person name="Cossart P."/>
        </authorList>
    </citation>
    <scope>NUCLEOTIDE SEQUENCE [LARGE SCALE GENOMIC DNA]</scope>
    <source>
        <strain>ATCC BAA-679 / EGD-e</strain>
    </source>
</reference>
<sequence length="186" mass="20979">MKLIAGLGNPGKKYERTRHNVGFMVVDELSFRHQTPWKKSKFNGMTSEIIVGGEKMILVKPLTFMNASGECIRPLMDYYNIPIEDVVIVYDDLDLPVGKIRLRQKGSAGGHNGMKSIIQHVKTQEFNRIRVGVSRPLKGEVINYVLGDFPKAEQPDIIAAIQKSADAIEDFAQTPFIEVMNKYNQK</sequence>
<evidence type="ECO:0000255" key="1">
    <source>
        <dbReference type="HAMAP-Rule" id="MF_00083"/>
    </source>
</evidence>